<organism>
    <name type="scientific">Danio rerio</name>
    <name type="common">Zebrafish</name>
    <name type="synonym">Brachydanio rerio</name>
    <dbReference type="NCBI Taxonomy" id="7955"/>
    <lineage>
        <taxon>Eukaryota</taxon>
        <taxon>Metazoa</taxon>
        <taxon>Chordata</taxon>
        <taxon>Craniata</taxon>
        <taxon>Vertebrata</taxon>
        <taxon>Euteleostomi</taxon>
        <taxon>Actinopterygii</taxon>
        <taxon>Neopterygii</taxon>
        <taxon>Teleostei</taxon>
        <taxon>Ostariophysi</taxon>
        <taxon>Cypriniformes</taxon>
        <taxon>Danionidae</taxon>
        <taxon>Danioninae</taxon>
        <taxon>Danio</taxon>
    </lineage>
</organism>
<proteinExistence type="evidence at transcript level"/>
<sequence>MADAVGEVLEGSWNQDLADALDSAVCDLNSDQDGVIQVRDLSPPQRAKLWMIALNVSGKGDSLSSWDGVLDLPEQTLIHSRSQQLIDELGIPVEEGRDLVSDVESVITFYCKSRNVTFTPDLSWPHILKPLLGLQLSRKDLYNCFYAIMNKYIPRDCIVKGRPFHLFRLLLQYHEPEFCSFLDTKKITPDSYAINWLGSLFSSHCLPEVTQALWDVYLQQADPFLIFFLMLIILVNAKDNILIQEGDNKEEIIKMLEQSPSLLEAEDIEDLFSLAQYYNSKTPLSLRKENHNLFGSSLVALKEEDMDLSQALCLPVSVPEILQANQLQPEGVRFFVVDCRPAEQYNAGHLSTAFHLDSDLMLHNPSELALSVKSLLEAQKQSLESGSVASGEHLCFMGSGREEEDMYMNMVLAHFLQKNKEFVSIAKGGFMALQQHLADINVEGPDNVYVHWIVSTSGSHSSLSSADGELNSTDGKGVKSLVNKMTFALKSKSVNVKEKVISFIENTSTPVERHVSSSDRVGKPYRGVKPVFSIGDEEEYDTDEIDSSSISDDDRKEIVNIQTWINKPDVKHHIPCNEVKETGHMFPSHLLITATHMYCLREIAARKGFAYIQSRQALNSVVKITSKKKHPELITFKFGNNNAAGVEIVAVERYLIPNAGDATKVIKQQIMKVLDALESS</sequence>
<evidence type="ECO:0000250" key="1">
    <source>
        <dbReference type="UniProtKB" id="Q8K0F1"/>
    </source>
</evidence>
<evidence type="ECO:0000250" key="2">
    <source>
        <dbReference type="UniProtKB" id="Q9NUY8"/>
    </source>
</evidence>
<evidence type="ECO:0000255" key="3">
    <source>
        <dbReference type="PROSITE-ProRule" id="PRU00163"/>
    </source>
</evidence>
<evidence type="ECO:0000255" key="4">
    <source>
        <dbReference type="PROSITE-ProRule" id="PRU00173"/>
    </source>
</evidence>
<evidence type="ECO:0000269" key="5">
    <source>
    </source>
</evidence>
<feature type="chain" id="PRO_0000287501" description="TBC1 domain family member 23">
    <location>
        <begin position="1"/>
        <end position="680"/>
    </location>
</feature>
<feature type="domain" description="Rab-GAP TBC" evidence="3">
    <location>
        <begin position="40"/>
        <end position="221"/>
    </location>
</feature>
<feature type="domain" description="Rhodanese" evidence="4">
    <location>
        <begin position="330"/>
        <end position="442"/>
    </location>
</feature>
<dbReference type="EMBL" id="BC055235">
    <property type="protein sequence ID" value="AAH55235.1"/>
    <property type="molecule type" value="mRNA"/>
</dbReference>
<dbReference type="RefSeq" id="NP_956781.1">
    <property type="nucleotide sequence ID" value="NM_200487.1"/>
</dbReference>
<dbReference type="SMR" id="Q7SXV1"/>
<dbReference type="FunCoup" id="Q7SXV1">
    <property type="interactions" value="2771"/>
</dbReference>
<dbReference type="STRING" id="7955.ENSDARP00000065137"/>
<dbReference type="PaxDb" id="7955-ENSDARP00000065137"/>
<dbReference type="GeneID" id="798995"/>
<dbReference type="KEGG" id="dre:798995"/>
<dbReference type="AGR" id="ZFIN:ZDB-GENE-040426-1253"/>
<dbReference type="CTD" id="55773"/>
<dbReference type="ZFIN" id="ZDB-GENE-040426-1253">
    <property type="gene designation" value="tbc1d23"/>
</dbReference>
<dbReference type="eggNOG" id="KOG3636">
    <property type="taxonomic scope" value="Eukaryota"/>
</dbReference>
<dbReference type="InParanoid" id="Q7SXV1"/>
<dbReference type="OrthoDB" id="73307at2759"/>
<dbReference type="PhylomeDB" id="Q7SXV1"/>
<dbReference type="PRO" id="PR:Q7SXV1"/>
<dbReference type="Proteomes" id="UP000000437">
    <property type="component" value="Alternate scaffold 6"/>
</dbReference>
<dbReference type="Proteomes" id="UP000000437">
    <property type="component" value="Chromosome 6"/>
</dbReference>
<dbReference type="GO" id="GO:0031410">
    <property type="term" value="C:cytoplasmic vesicle"/>
    <property type="evidence" value="ECO:0000250"/>
    <property type="project" value="UniProtKB"/>
</dbReference>
<dbReference type="GO" id="GO:0005829">
    <property type="term" value="C:cytosol"/>
    <property type="evidence" value="ECO:0007669"/>
    <property type="project" value="GOC"/>
</dbReference>
<dbReference type="GO" id="GO:0005802">
    <property type="term" value="C:trans-Golgi network"/>
    <property type="evidence" value="ECO:0000250"/>
    <property type="project" value="UniProtKB"/>
</dbReference>
<dbReference type="GO" id="GO:0007420">
    <property type="term" value="P:brain development"/>
    <property type="evidence" value="ECO:0000315"/>
    <property type="project" value="ZFIN"/>
</dbReference>
<dbReference type="GO" id="GO:1990403">
    <property type="term" value="P:embryonic brain development"/>
    <property type="evidence" value="ECO:0000315"/>
    <property type="project" value="UniProtKB"/>
</dbReference>
<dbReference type="GO" id="GO:0042147">
    <property type="term" value="P:retrograde transport, endosome to Golgi"/>
    <property type="evidence" value="ECO:0000318"/>
    <property type="project" value="GO_Central"/>
</dbReference>
<dbReference type="GO" id="GO:0099041">
    <property type="term" value="P:vesicle tethering to Golgi"/>
    <property type="evidence" value="ECO:0000250"/>
    <property type="project" value="UniProtKB"/>
</dbReference>
<dbReference type="CDD" id="cd20788">
    <property type="entry name" value="TBC1D23_C-like"/>
    <property type="match status" value="1"/>
</dbReference>
<dbReference type="FunFam" id="1.10.472.80:FF:000017">
    <property type="entry name" value="TBC1 domain family member 23"/>
    <property type="match status" value="1"/>
</dbReference>
<dbReference type="FunFam" id="3.40.250.10:FF:000002">
    <property type="entry name" value="TBC1 domain family member 23"/>
    <property type="match status" value="1"/>
</dbReference>
<dbReference type="Gene3D" id="3.40.250.10">
    <property type="entry name" value="Rhodanese-like domain"/>
    <property type="match status" value="1"/>
</dbReference>
<dbReference type="Gene3D" id="1.10.472.80">
    <property type="entry name" value="Ypt/Rab-GAP domain of gyp1p, domain 3"/>
    <property type="match status" value="1"/>
</dbReference>
<dbReference type="InterPro" id="IPR000195">
    <property type="entry name" value="Rab-GAP-TBC_dom"/>
</dbReference>
<dbReference type="InterPro" id="IPR035969">
    <property type="entry name" value="Rab-GAP_TBC_sf"/>
</dbReference>
<dbReference type="InterPro" id="IPR001763">
    <property type="entry name" value="Rhodanese-like_dom"/>
</dbReference>
<dbReference type="InterPro" id="IPR036873">
    <property type="entry name" value="Rhodanese-like_dom_sf"/>
</dbReference>
<dbReference type="InterPro" id="IPR039755">
    <property type="entry name" value="TBC1D23"/>
</dbReference>
<dbReference type="InterPro" id="IPR045799">
    <property type="entry name" value="TBC1D23_C"/>
</dbReference>
<dbReference type="PANTHER" id="PTHR13297:SF5">
    <property type="entry name" value="TBC1 DOMAIN FAMILY MEMBER 23"/>
    <property type="match status" value="1"/>
</dbReference>
<dbReference type="PANTHER" id="PTHR13297">
    <property type="entry name" value="TBC1 DOMAIN FAMILY MEMBER 23-RELATED"/>
    <property type="match status" value="1"/>
</dbReference>
<dbReference type="Pfam" id="PF00566">
    <property type="entry name" value="RabGAP-TBC"/>
    <property type="match status" value="1"/>
</dbReference>
<dbReference type="Pfam" id="PF00581">
    <property type="entry name" value="Rhodanese"/>
    <property type="match status" value="1"/>
</dbReference>
<dbReference type="Pfam" id="PF19430">
    <property type="entry name" value="TBC1D23_C"/>
    <property type="match status" value="1"/>
</dbReference>
<dbReference type="SMART" id="SM00164">
    <property type="entry name" value="TBC"/>
    <property type="match status" value="1"/>
</dbReference>
<dbReference type="SUPFAM" id="SSF52821">
    <property type="entry name" value="Rhodanese/Cell cycle control phosphatase"/>
    <property type="match status" value="1"/>
</dbReference>
<dbReference type="SUPFAM" id="SSF47923">
    <property type="entry name" value="Ypt/Rab-GAP domain of gyp1p"/>
    <property type="match status" value="1"/>
</dbReference>
<dbReference type="PROSITE" id="PS50206">
    <property type="entry name" value="RHODANESE_3"/>
    <property type="match status" value="1"/>
</dbReference>
<dbReference type="PROSITE" id="PS50086">
    <property type="entry name" value="TBC_RABGAP"/>
    <property type="match status" value="1"/>
</dbReference>
<gene>
    <name type="primary">tbc1d23</name>
    <name type="ORF">zgc:63756</name>
</gene>
<keyword id="KW-0968">Cytoplasmic vesicle</keyword>
<keyword id="KW-0217">Developmental protein</keyword>
<keyword id="KW-0333">Golgi apparatus</keyword>
<keyword id="KW-1185">Reference proteome</keyword>
<name>TBC23_DANRE</name>
<reference key="1">
    <citation type="submission" date="2003-07" db="EMBL/GenBank/DDBJ databases">
        <authorList>
            <consortium name="NIH - Zebrafish Gene Collection (ZGC) project"/>
        </authorList>
    </citation>
    <scope>NUCLEOTIDE SEQUENCE [LARGE SCALE MRNA]</scope>
    <source>
        <strain>AB</strain>
    </source>
</reference>
<reference key="2">
    <citation type="journal article" date="2017" name="Am. J. Hum. Genet.">
        <title>Homozygous mutations in TBC1D23 lead to a non-degenerative form of pontocerebellar hypoplasia.</title>
        <authorList>
            <person name="Marin-Valencia I."/>
            <person name="Gerondopoulos A."/>
            <person name="Zaki M.S."/>
            <person name="Ben-Omran T."/>
            <person name="Almureikhi M."/>
            <person name="Demir E."/>
            <person name="Guemez-Gamboa A."/>
            <person name="Gregor A."/>
            <person name="Issa M.Y."/>
            <person name="Appelhof B."/>
            <person name="Roosing S."/>
            <person name="Musaev D."/>
            <person name="Rosti B."/>
            <person name="Wirth S."/>
            <person name="Stanley V."/>
            <person name="Baas F."/>
            <person name="Barr F.A."/>
            <person name="Gleeson J.G."/>
        </authorList>
    </citation>
    <scope>FUNCTION</scope>
    <scope>DEVELOPMENTAL STAGE</scope>
    <scope>DISRUPTION PHENOTYPE</scope>
</reference>
<comment type="function">
    <text evidence="1 2 5">Putative Rab GTPase-activating protein which plays a role in vesicular trafficking. Involved in endosome-to-Golgi trafficking. Acts as a bridging protein by binding simultaneously to golgins, located at the trans-Golgi, and to the WASH complex, located on endosome-derived vesicles (By similarity). Plays a role in brain development (PubMed:28823706). May act as a general inhibitor of innate immunity signaling (By similarity).</text>
</comment>
<comment type="subcellular location">
    <subcellularLocation>
        <location evidence="2">Golgi apparatus</location>
        <location evidence="2">trans-Golgi network</location>
    </subcellularLocation>
    <subcellularLocation>
        <location evidence="2">Cytoplasmic vesicle</location>
    </subcellularLocation>
</comment>
<comment type="developmental stage">
    <text evidence="5">Detected as early as 1 hour post-fertilization (hpf). Primarily localized in the head at 48 hpf.</text>
</comment>
<comment type="disruption phenotype">
    <text evidence="5">Morpholino knockdown of the protein causes reduced brain and eye size and curved tails at 48 hpf.</text>
</comment>
<protein>
    <recommendedName>
        <fullName>TBC1 domain family member 23</fullName>
    </recommendedName>
</protein>
<accession>Q7SXV1</accession>